<sequence length="193" mass="21583">MSYRKQRETKETAIDIRMDLNDNQASSINTGVGFLDHMLTLFSFHSGINLQINVQGDTEVDDHHTTEDIGIVLGQLLLEAIKDKQSFTRYGAFYIPMDETLARVVTDISGRPYLSFNAEFSKEKVGTFDTELVEEFFRGLVINARLTTHIDLIRGGNTHHEIEAIFKAFARSLKIALSDDGSKGVPSSKGVIE</sequence>
<reference key="1">
    <citation type="journal article" date="2009" name="Appl. Environ. Microbiol.">
        <title>Genome analysis of the meat starter culture bacterium Staphylococcus carnosus TM300.</title>
        <authorList>
            <person name="Rosenstein R."/>
            <person name="Nerz C."/>
            <person name="Biswas L."/>
            <person name="Resch A."/>
            <person name="Raddatz G."/>
            <person name="Schuster S.C."/>
            <person name="Goetz F."/>
        </authorList>
    </citation>
    <scope>NUCLEOTIDE SEQUENCE [LARGE SCALE GENOMIC DNA]</scope>
    <source>
        <strain>TM300</strain>
    </source>
</reference>
<comment type="catalytic activity">
    <reaction evidence="1">
        <text>D-erythro-1-(imidazol-4-yl)glycerol 3-phosphate = 3-(imidazol-4-yl)-2-oxopropyl phosphate + H2O</text>
        <dbReference type="Rhea" id="RHEA:11040"/>
        <dbReference type="ChEBI" id="CHEBI:15377"/>
        <dbReference type="ChEBI" id="CHEBI:57766"/>
        <dbReference type="ChEBI" id="CHEBI:58278"/>
        <dbReference type="EC" id="4.2.1.19"/>
    </reaction>
</comment>
<comment type="pathway">
    <text evidence="1">Amino-acid biosynthesis; L-histidine biosynthesis; L-histidine from 5-phospho-alpha-D-ribose 1-diphosphate: step 6/9.</text>
</comment>
<comment type="subcellular location">
    <subcellularLocation>
        <location evidence="1">Cytoplasm</location>
    </subcellularLocation>
</comment>
<comment type="similarity">
    <text evidence="1">Belongs to the imidazoleglycerol-phosphate dehydratase family.</text>
</comment>
<evidence type="ECO:0000255" key="1">
    <source>
        <dbReference type="HAMAP-Rule" id="MF_00076"/>
    </source>
</evidence>
<dbReference type="EC" id="4.2.1.19" evidence="1"/>
<dbReference type="EMBL" id="AM295250">
    <property type="protein sequence ID" value="CAL27545.1"/>
    <property type="molecule type" value="Genomic_DNA"/>
</dbReference>
<dbReference type="RefSeq" id="WP_015899888.1">
    <property type="nucleotide sequence ID" value="NC_012121.1"/>
</dbReference>
<dbReference type="SMR" id="B9DQ86"/>
<dbReference type="GeneID" id="93795570"/>
<dbReference type="KEGG" id="sca:SCA_0633"/>
<dbReference type="eggNOG" id="COG0131">
    <property type="taxonomic scope" value="Bacteria"/>
</dbReference>
<dbReference type="HOGENOM" id="CLU_044308_3_0_9"/>
<dbReference type="OrthoDB" id="9790411at2"/>
<dbReference type="BioCyc" id="SCAR396513:SCA_RS03215-MONOMER"/>
<dbReference type="UniPathway" id="UPA00031">
    <property type="reaction ID" value="UER00011"/>
</dbReference>
<dbReference type="Proteomes" id="UP000000444">
    <property type="component" value="Chromosome"/>
</dbReference>
<dbReference type="GO" id="GO:0005737">
    <property type="term" value="C:cytoplasm"/>
    <property type="evidence" value="ECO:0007669"/>
    <property type="project" value="UniProtKB-SubCell"/>
</dbReference>
<dbReference type="GO" id="GO:0004424">
    <property type="term" value="F:imidazoleglycerol-phosphate dehydratase activity"/>
    <property type="evidence" value="ECO:0007669"/>
    <property type="project" value="UniProtKB-UniRule"/>
</dbReference>
<dbReference type="GO" id="GO:0000105">
    <property type="term" value="P:L-histidine biosynthetic process"/>
    <property type="evidence" value="ECO:0007669"/>
    <property type="project" value="UniProtKB-UniRule"/>
</dbReference>
<dbReference type="CDD" id="cd07914">
    <property type="entry name" value="IGPD"/>
    <property type="match status" value="1"/>
</dbReference>
<dbReference type="FunFam" id="3.30.230.40:FF:000001">
    <property type="entry name" value="Imidazoleglycerol-phosphate dehydratase HisB"/>
    <property type="match status" value="1"/>
</dbReference>
<dbReference type="FunFam" id="3.30.230.40:FF:000003">
    <property type="entry name" value="Imidazoleglycerol-phosphate dehydratase HisB"/>
    <property type="match status" value="1"/>
</dbReference>
<dbReference type="Gene3D" id="3.30.230.40">
    <property type="entry name" value="Imidazole glycerol phosphate dehydratase, domain 1"/>
    <property type="match status" value="2"/>
</dbReference>
<dbReference type="HAMAP" id="MF_00076">
    <property type="entry name" value="HisB"/>
    <property type="match status" value="1"/>
</dbReference>
<dbReference type="InterPro" id="IPR038494">
    <property type="entry name" value="IGPD_sf"/>
</dbReference>
<dbReference type="InterPro" id="IPR000807">
    <property type="entry name" value="ImidazoleglycerolP_deHydtase"/>
</dbReference>
<dbReference type="InterPro" id="IPR020565">
    <property type="entry name" value="ImidazoleglycerP_deHydtase_CS"/>
</dbReference>
<dbReference type="InterPro" id="IPR020568">
    <property type="entry name" value="Ribosomal_Su5_D2-typ_SF"/>
</dbReference>
<dbReference type="NCBIfam" id="NF002107">
    <property type="entry name" value="PRK00951.1-2"/>
    <property type="match status" value="1"/>
</dbReference>
<dbReference type="NCBIfam" id="NF002111">
    <property type="entry name" value="PRK00951.2-1"/>
    <property type="match status" value="1"/>
</dbReference>
<dbReference type="NCBIfam" id="NF002114">
    <property type="entry name" value="PRK00951.2-4"/>
    <property type="match status" value="1"/>
</dbReference>
<dbReference type="PANTHER" id="PTHR23133:SF2">
    <property type="entry name" value="IMIDAZOLEGLYCEROL-PHOSPHATE DEHYDRATASE"/>
    <property type="match status" value="1"/>
</dbReference>
<dbReference type="PANTHER" id="PTHR23133">
    <property type="entry name" value="IMIDAZOLEGLYCEROL-PHOSPHATE DEHYDRATASE HIS7"/>
    <property type="match status" value="1"/>
</dbReference>
<dbReference type="Pfam" id="PF00475">
    <property type="entry name" value="IGPD"/>
    <property type="match status" value="1"/>
</dbReference>
<dbReference type="SUPFAM" id="SSF54211">
    <property type="entry name" value="Ribosomal protein S5 domain 2-like"/>
    <property type="match status" value="2"/>
</dbReference>
<dbReference type="PROSITE" id="PS00954">
    <property type="entry name" value="IGP_DEHYDRATASE_1"/>
    <property type="match status" value="1"/>
</dbReference>
<dbReference type="PROSITE" id="PS00955">
    <property type="entry name" value="IGP_DEHYDRATASE_2"/>
    <property type="match status" value="1"/>
</dbReference>
<name>HIS7_STACT</name>
<protein>
    <recommendedName>
        <fullName evidence="1">Imidazoleglycerol-phosphate dehydratase</fullName>
        <shortName evidence="1">IGPD</shortName>
        <ecNumber evidence="1">4.2.1.19</ecNumber>
    </recommendedName>
</protein>
<organism>
    <name type="scientific">Staphylococcus carnosus (strain TM300)</name>
    <dbReference type="NCBI Taxonomy" id="396513"/>
    <lineage>
        <taxon>Bacteria</taxon>
        <taxon>Bacillati</taxon>
        <taxon>Bacillota</taxon>
        <taxon>Bacilli</taxon>
        <taxon>Bacillales</taxon>
        <taxon>Staphylococcaceae</taxon>
        <taxon>Staphylococcus</taxon>
    </lineage>
</organism>
<proteinExistence type="inferred from homology"/>
<keyword id="KW-0028">Amino-acid biosynthesis</keyword>
<keyword id="KW-0963">Cytoplasm</keyword>
<keyword id="KW-0368">Histidine biosynthesis</keyword>
<keyword id="KW-0456">Lyase</keyword>
<keyword id="KW-1185">Reference proteome</keyword>
<accession>B9DQ86</accession>
<feature type="chain" id="PRO_1000190625" description="Imidazoleglycerol-phosphate dehydratase">
    <location>
        <begin position="1"/>
        <end position="193"/>
    </location>
</feature>
<gene>
    <name evidence="1" type="primary">hisB</name>
    <name type="ordered locus">Sca_0633</name>
</gene>